<protein>
    <recommendedName>
        <fullName evidence="1">Dual-specificity RNA methyltransferase RlmN</fullName>
        <ecNumber evidence="1">2.1.1.192</ecNumber>
    </recommendedName>
    <alternativeName>
        <fullName evidence="1">23S rRNA (adenine(2503)-C(2))-methyltransferase</fullName>
    </alternativeName>
    <alternativeName>
        <fullName evidence="1">23S rRNA m2A2503 methyltransferase</fullName>
    </alternativeName>
    <alternativeName>
        <fullName evidence="1">Ribosomal RNA large subunit methyltransferase N</fullName>
    </alternativeName>
    <alternativeName>
        <fullName evidence="1">tRNA (adenine(37)-C(2))-methyltransferase</fullName>
    </alternativeName>
    <alternativeName>
        <fullName evidence="1">tRNA m2A37 methyltransferase</fullName>
    </alternativeName>
</protein>
<keyword id="KW-0004">4Fe-4S</keyword>
<keyword id="KW-0963">Cytoplasm</keyword>
<keyword id="KW-1015">Disulfide bond</keyword>
<keyword id="KW-0408">Iron</keyword>
<keyword id="KW-0411">Iron-sulfur</keyword>
<keyword id="KW-0479">Metal-binding</keyword>
<keyword id="KW-0489">Methyltransferase</keyword>
<keyword id="KW-0698">rRNA processing</keyword>
<keyword id="KW-0949">S-adenosyl-L-methionine</keyword>
<keyword id="KW-0808">Transferase</keyword>
<keyword id="KW-0819">tRNA processing</keyword>
<sequence>MDQQKVNLLNYNYSQLRELLIAWDEKPFRAQQLFQWIHQVGICDFAQMTNLGKVLRNKLSQLACIDLPEIVACQKSADGTHKWLLKLECGNCIETVFIPEANRGTLCVSSQVGCALNCSFCSTAKQGFNRNLSTAEIIGQVWLAARELSDNNGTHDKKITNVVMMGMGEPLLNFDNVVSAMNIMMDDLAYGLSKRRVTLSTSGVLPEMERLREVSPVALAVSLHAPTDELRNELVPINKKYPLSQLISLCKRYFKDEPRRKVTFEYVMLKGVNDQPEHASQLIKLLHNVPAKVNLIPFNPFPLTQYQRSSRETIDAFRDKLMKHGINTITRKTRGDDIDAACGQLAGEVKDKTSRSQRWQKLHFMSKTEKSTELTISSEEIA</sequence>
<gene>
    <name evidence="1" type="primary">rlmN</name>
    <name type="ordered locus">lpp1504</name>
</gene>
<accession>Q5X516</accession>
<feature type="chain" id="PRO_0000350228" description="Dual-specificity RNA methyltransferase RlmN">
    <location>
        <begin position="1"/>
        <end position="382"/>
    </location>
</feature>
<feature type="domain" description="Radical SAM core" evidence="2">
    <location>
        <begin position="100"/>
        <end position="336"/>
    </location>
</feature>
<feature type="active site" description="Proton acceptor" evidence="1">
    <location>
        <position position="94"/>
    </location>
</feature>
<feature type="active site" description="S-methylcysteine intermediate" evidence="1">
    <location>
        <position position="342"/>
    </location>
</feature>
<feature type="binding site" evidence="1">
    <location>
        <position position="114"/>
    </location>
    <ligand>
        <name>[4Fe-4S] cluster</name>
        <dbReference type="ChEBI" id="CHEBI:49883"/>
        <note>4Fe-4S-S-AdoMet</note>
    </ligand>
</feature>
<feature type="binding site" evidence="1">
    <location>
        <position position="118"/>
    </location>
    <ligand>
        <name>[4Fe-4S] cluster</name>
        <dbReference type="ChEBI" id="CHEBI:49883"/>
        <note>4Fe-4S-S-AdoMet</note>
    </ligand>
</feature>
<feature type="binding site" evidence="1">
    <location>
        <position position="121"/>
    </location>
    <ligand>
        <name>[4Fe-4S] cluster</name>
        <dbReference type="ChEBI" id="CHEBI:49883"/>
        <note>4Fe-4S-S-AdoMet</note>
    </ligand>
</feature>
<feature type="binding site" evidence="1">
    <location>
        <begin position="168"/>
        <end position="169"/>
    </location>
    <ligand>
        <name>S-adenosyl-L-methionine</name>
        <dbReference type="ChEBI" id="CHEBI:59789"/>
    </ligand>
</feature>
<feature type="binding site" evidence="1">
    <location>
        <position position="200"/>
    </location>
    <ligand>
        <name>S-adenosyl-L-methionine</name>
        <dbReference type="ChEBI" id="CHEBI:59789"/>
    </ligand>
</feature>
<feature type="binding site" evidence="1">
    <location>
        <begin position="222"/>
        <end position="224"/>
    </location>
    <ligand>
        <name>S-adenosyl-L-methionine</name>
        <dbReference type="ChEBI" id="CHEBI:59789"/>
    </ligand>
</feature>
<feature type="binding site" evidence="1">
    <location>
        <position position="299"/>
    </location>
    <ligand>
        <name>S-adenosyl-L-methionine</name>
        <dbReference type="ChEBI" id="CHEBI:59789"/>
    </ligand>
</feature>
<feature type="disulfide bond" description="(transient)" evidence="1">
    <location>
        <begin position="107"/>
        <end position="342"/>
    </location>
</feature>
<comment type="function">
    <text evidence="1">Specifically methylates position 2 of adenine 2503 in 23S rRNA and position 2 of adenine 37 in tRNAs. m2A2503 modification seems to play a crucial role in the proofreading step occurring at the peptidyl transferase center and thus would serve to optimize ribosomal fidelity.</text>
</comment>
<comment type="catalytic activity">
    <reaction evidence="1">
        <text>adenosine(2503) in 23S rRNA + 2 reduced [2Fe-2S]-[ferredoxin] + 2 S-adenosyl-L-methionine = 2-methyladenosine(2503) in 23S rRNA + 5'-deoxyadenosine + L-methionine + 2 oxidized [2Fe-2S]-[ferredoxin] + S-adenosyl-L-homocysteine</text>
        <dbReference type="Rhea" id="RHEA:42916"/>
        <dbReference type="Rhea" id="RHEA-COMP:10000"/>
        <dbReference type="Rhea" id="RHEA-COMP:10001"/>
        <dbReference type="Rhea" id="RHEA-COMP:10152"/>
        <dbReference type="Rhea" id="RHEA-COMP:10282"/>
        <dbReference type="ChEBI" id="CHEBI:17319"/>
        <dbReference type="ChEBI" id="CHEBI:33737"/>
        <dbReference type="ChEBI" id="CHEBI:33738"/>
        <dbReference type="ChEBI" id="CHEBI:57844"/>
        <dbReference type="ChEBI" id="CHEBI:57856"/>
        <dbReference type="ChEBI" id="CHEBI:59789"/>
        <dbReference type="ChEBI" id="CHEBI:74411"/>
        <dbReference type="ChEBI" id="CHEBI:74497"/>
        <dbReference type="EC" id="2.1.1.192"/>
    </reaction>
</comment>
<comment type="catalytic activity">
    <reaction evidence="1">
        <text>adenosine(37) in tRNA + 2 reduced [2Fe-2S]-[ferredoxin] + 2 S-adenosyl-L-methionine = 2-methyladenosine(37) in tRNA + 5'-deoxyadenosine + L-methionine + 2 oxidized [2Fe-2S]-[ferredoxin] + S-adenosyl-L-homocysteine</text>
        <dbReference type="Rhea" id="RHEA:43332"/>
        <dbReference type="Rhea" id="RHEA-COMP:10000"/>
        <dbReference type="Rhea" id="RHEA-COMP:10001"/>
        <dbReference type="Rhea" id="RHEA-COMP:10162"/>
        <dbReference type="Rhea" id="RHEA-COMP:10485"/>
        <dbReference type="ChEBI" id="CHEBI:17319"/>
        <dbReference type="ChEBI" id="CHEBI:33737"/>
        <dbReference type="ChEBI" id="CHEBI:33738"/>
        <dbReference type="ChEBI" id="CHEBI:57844"/>
        <dbReference type="ChEBI" id="CHEBI:57856"/>
        <dbReference type="ChEBI" id="CHEBI:59789"/>
        <dbReference type="ChEBI" id="CHEBI:74411"/>
        <dbReference type="ChEBI" id="CHEBI:74497"/>
        <dbReference type="EC" id="2.1.1.192"/>
    </reaction>
</comment>
<comment type="cofactor">
    <cofactor evidence="1">
        <name>[4Fe-4S] cluster</name>
        <dbReference type="ChEBI" id="CHEBI:49883"/>
    </cofactor>
    <text evidence="1">Binds 1 [4Fe-4S] cluster. The cluster is coordinated with 3 cysteines and an exchangeable S-adenosyl-L-methionine.</text>
</comment>
<comment type="subcellular location">
    <subcellularLocation>
        <location evidence="1">Cytoplasm</location>
    </subcellularLocation>
</comment>
<comment type="miscellaneous">
    <text evidence="1">Reaction proceeds by a ping-pong mechanism involving intermediate methylation of a conserved cysteine residue.</text>
</comment>
<comment type="similarity">
    <text evidence="1">Belongs to the radical SAM superfamily. RlmN family.</text>
</comment>
<evidence type="ECO:0000255" key="1">
    <source>
        <dbReference type="HAMAP-Rule" id="MF_01849"/>
    </source>
</evidence>
<evidence type="ECO:0000255" key="2">
    <source>
        <dbReference type="PROSITE-ProRule" id="PRU01266"/>
    </source>
</evidence>
<proteinExistence type="inferred from homology"/>
<reference key="1">
    <citation type="journal article" date="2004" name="Nat. Genet.">
        <title>Evidence in the Legionella pneumophila genome for exploitation of host cell functions and high genome plasticity.</title>
        <authorList>
            <person name="Cazalet C."/>
            <person name="Rusniok C."/>
            <person name="Brueggemann H."/>
            <person name="Zidane N."/>
            <person name="Magnier A."/>
            <person name="Ma L."/>
            <person name="Tichit M."/>
            <person name="Jarraud S."/>
            <person name="Bouchier C."/>
            <person name="Vandenesch F."/>
            <person name="Kunst F."/>
            <person name="Etienne J."/>
            <person name="Glaser P."/>
            <person name="Buchrieser C."/>
        </authorList>
    </citation>
    <scope>NUCLEOTIDE SEQUENCE [LARGE SCALE GENOMIC DNA]</scope>
    <source>
        <strain>Paris</strain>
    </source>
</reference>
<organism>
    <name type="scientific">Legionella pneumophila (strain Paris)</name>
    <dbReference type="NCBI Taxonomy" id="297246"/>
    <lineage>
        <taxon>Bacteria</taxon>
        <taxon>Pseudomonadati</taxon>
        <taxon>Pseudomonadota</taxon>
        <taxon>Gammaproteobacteria</taxon>
        <taxon>Legionellales</taxon>
        <taxon>Legionellaceae</taxon>
        <taxon>Legionella</taxon>
    </lineage>
</organism>
<dbReference type="EC" id="2.1.1.192" evidence="1"/>
<dbReference type="EMBL" id="CR628336">
    <property type="protein sequence ID" value="CAH12655.1"/>
    <property type="molecule type" value="Genomic_DNA"/>
</dbReference>
<dbReference type="RefSeq" id="WP_011213827.1">
    <property type="nucleotide sequence ID" value="NC_006368.1"/>
</dbReference>
<dbReference type="SMR" id="Q5X516"/>
<dbReference type="KEGG" id="lpp:lpp1504"/>
<dbReference type="LegioList" id="lpp1504"/>
<dbReference type="HOGENOM" id="CLU_029101_0_0_6"/>
<dbReference type="GO" id="GO:0005737">
    <property type="term" value="C:cytoplasm"/>
    <property type="evidence" value="ECO:0007669"/>
    <property type="project" value="UniProtKB-SubCell"/>
</dbReference>
<dbReference type="GO" id="GO:0051539">
    <property type="term" value="F:4 iron, 4 sulfur cluster binding"/>
    <property type="evidence" value="ECO:0007669"/>
    <property type="project" value="UniProtKB-UniRule"/>
</dbReference>
<dbReference type="GO" id="GO:0046872">
    <property type="term" value="F:metal ion binding"/>
    <property type="evidence" value="ECO:0007669"/>
    <property type="project" value="UniProtKB-KW"/>
</dbReference>
<dbReference type="GO" id="GO:0070040">
    <property type="term" value="F:rRNA (adenine(2503)-C2-)-methyltransferase activity"/>
    <property type="evidence" value="ECO:0007669"/>
    <property type="project" value="UniProtKB-UniRule"/>
</dbReference>
<dbReference type="GO" id="GO:0019843">
    <property type="term" value="F:rRNA binding"/>
    <property type="evidence" value="ECO:0007669"/>
    <property type="project" value="UniProtKB-UniRule"/>
</dbReference>
<dbReference type="GO" id="GO:0002935">
    <property type="term" value="F:tRNA (adenine(37)-C2)-methyltransferase activity"/>
    <property type="evidence" value="ECO:0007669"/>
    <property type="project" value="UniProtKB-UniRule"/>
</dbReference>
<dbReference type="GO" id="GO:0000049">
    <property type="term" value="F:tRNA binding"/>
    <property type="evidence" value="ECO:0007669"/>
    <property type="project" value="UniProtKB-UniRule"/>
</dbReference>
<dbReference type="GO" id="GO:0070475">
    <property type="term" value="P:rRNA base methylation"/>
    <property type="evidence" value="ECO:0007669"/>
    <property type="project" value="UniProtKB-UniRule"/>
</dbReference>
<dbReference type="GO" id="GO:0030488">
    <property type="term" value="P:tRNA methylation"/>
    <property type="evidence" value="ECO:0007669"/>
    <property type="project" value="UniProtKB-UniRule"/>
</dbReference>
<dbReference type="CDD" id="cd01335">
    <property type="entry name" value="Radical_SAM"/>
    <property type="match status" value="1"/>
</dbReference>
<dbReference type="FunFam" id="1.10.150.530:FF:000003">
    <property type="entry name" value="Dual-specificity RNA methyltransferase RlmN"/>
    <property type="match status" value="1"/>
</dbReference>
<dbReference type="FunFam" id="3.20.20.70:FF:000008">
    <property type="entry name" value="Dual-specificity RNA methyltransferase RlmN"/>
    <property type="match status" value="1"/>
</dbReference>
<dbReference type="Gene3D" id="1.10.150.530">
    <property type="match status" value="1"/>
</dbReference>
<dbReference type="Gene3D" id="3.20.20.70">
    <property type="entry name" value="Aldolase class I"/>
    <property type="match status" value="1"/>
</dbReference>
<dbReference type="HAMAP" id="MF_01849">
    <property type="entry name" value="RNA_methyltr_RlmN"/>
    <property type="match status" value="1"/>
</dbReference>
<dbReference type="InterPro" id="IPR013785">
    <property type="entry name" value="Aldolase_TIM"/>
</dbReference>
<dbReference type="InterPro" id="IPR040072">
    <property type="entry name" value="Methyltransferase_A"/>
</dbReference>
<dbReference type="InterPro" id="IPR048641">
    <property type="entry name" value="RlmN_N"/>
</dbReference>
<dbReference type="InterPro" id="IPR027492">
    <property type="entry name" value="RNA_MTrfase_RlmN"/>
</dbReference>
<dbReference type="InterPro" id="IPR004383">
    <property type="entry name" value="rRNA_lsu_MTrfase_RlmN/Cfr"/>
</dbReference>
<dbReference type="InterPro" id="IPR007197">
    <property type="entry name" value="rSAM"/>
</dbReference>
<dbReference type="NCBIfam" id="TIGR00048">
    <property type="entry name" value="rRNA_mod_RlmN"/>
    <property type="match status" value="1"/>
</dbReference>
<dbReference type="PANTHER" id="PTHR30544">
    <property type="entry name" value="23S RRNA METHYLTRANSFERASE"/>
    <property type="match status" value="1"/>
</dbReference>
<dbReference type="PANTHER" id="PTHR30544:SF5">
    <property type="entry name" value="RADICAL SAM CORE DOMAIN-CONTAINING PROTEIN"/>
    <property type="match status" value="1"/>
</dbReference>
<dbReference type="Pfam" id="PF04055">
    <property type="entry name" value="Radical_SAM"/>
    <property type="match status" value="1"/>
</dbReference>
<dbReference type="Pfam" id="PF21016">
    <property type="entry name" value="RlmN_N"/>
    <property type="match status" value="1"/>
</dbReference>
<dbReference type="PIRSF" id="PIRSF006004">
    <property type="entry name" value="CHP00048"/>
    <property type="match status" value="1"/>
</dbReference>
<dbReference type="SFLD" id="SFLDF00275">
    <property type="entry name" value="adenosine_C2_methyltransferase"/>
    <property type="match status" value="1"/>
</dbReference>
<dbReference type="SFLD" id="SFLDG01062">
    <property type="entry name" value="methyltransferase_(Class_A)"/>
    <property type="match status" value="1"/>
</dbReference>
<dbReference type="SUPFAM" id="SSF102114">
    <property type="entry name" value="Radical SAM enzymes"/>
    <property type="match status" value="1"/>
</dbReference>
<dbReference type="PROSITE" id="PS51918">
    <property type="entry name" value="RADICAL_SAM"/>
    <property type="match status" value="1"/>
</dbReference>
<name>RLMN_LEGPA</name>